<feature type="chain" id="PRO_0000392582" description="Structural polyprotein">
    <location>
        <begin position="1"/>
        <end position="1069"/>
    </location>
</feature>
<feature type="chain" id="PRO_0000392583" description="Precursor of VP2">
    <location>
        <begin position="1"/>
        <end position="486"/>
    </location>
</feature>
<feature type="chain" id="PRO_0000227865" description="Capsid protein VP2">
    <location>
        <begin position="1"/>
        <end position="417"/>
    </location>
</feature>
<feature type="peptide" id="PRO_0000227866" description="Structural peptide 1" evidence="1">
    <location>
        <begin position="418"/>
        <end position="460"/>
    </location>
</feature>
<feature type="peptide" id="PRO_0000227867" description="Structural peptide 2" evidence="1">
    <location>
        <begin position="461"/>
        <end position="467"/>
    </location>
</feature>
<feature type="peptide" id="PRO_0000227868" description="Structural peptide 3" evidence="1">
    <location>
        <begin position="468"/>
        <end position="474"/>
    </location>
</feature>
<feature type="peptide" id="PRO_0000227869" description="Structural peptide 4" evidence="1">
    <location>
        <begin position="475"/>
        <end position="486"/>
    </location>
</feature>
<feature type="chain" id="PRO_0000227870" description="Protein X">
    <location>
        <begin position="487"/>
        <end position="557"/>
    </location>
</feature>
<feature type="chain" id="PRO_0000227871" description="Protease VP4">
    <location>
        <begin position="558"/>
        <end position="791"/>
    </location>
</feature>
<feature type="chain" id="PRO_0000227872" description="Capsid protein VP3">
    <location>
        <begin position="792"/>
        <end position="1069"/>
    </location>
</feature>
<feature type="domain" description="Peptidase S50" evidence="2">
    <location>
        <begin position="558"/>
        <end position="791"/>
    </location>
</feature>
<feature type="region of interest" description="Disordered" evidence="3">
    <location>
        <begin position="504"/>
        <end position="534"/>
    </location>
</feature>
<feature type="region of interest" description="Disordered" evidence="3">
    <location>
        <begin position="876"/>
        <end position="900"/>
    </location>
</feature>
<feature type="region of interest" description="Disordered" evidence="3">
    <location>
        <begin position="1031"/>
        <end position="1069"/>
    </location>
</feature>
<feature type="compositionally biased region" description="Basic and acidic residues" evidence="3">
    <location>
        <begin position="512"/>
        <end position="534"/>
    </location>
</feature>
<feature type="active site" description="Nucleophile" evidence="2 4">
    <location>
        <position position="692"/>
    </location>
</feature>
<feature type="active site" evidence="2 4">
    <location>
        <position position="729"/>
    </location>
</feature>
<feature type="binding site" evidence="1">
    <location>
        <position position="28"/>
    </location>
    <ligand>
        <name>a divalent metal cation</name>
        <dbReference type="ChEBI" id="CHEBI:60240"/>
        <note>ligand shared between trimeric partners</note>
    </ligand>
</feature>
<feature type="site" description="Cleavage; by protease VP4">
    <location>
        <begin position="417"/>
        <end position="418"/>
    </location>
</feature>
<feature type="site" description="Cleavage; by protease VP4" evidence="1">
    <location>
        <begin position="460"/>
        <end position="461"/>
    </location>
</feature>
<feature type="site" description="Cleavage; by protease VP4" evidence="1">
    <location>
        <begin position="467"/>
        <end position="468"/>
    </location>
</feature>
<feature type="site" description="Cleavage; by protease VP4" evidence="1">
    <location>
        <begin position="474"/>
        <end position="475"/>
    </location>
</feature>
<feature type="site" description="Cleavage; by protease VP4">
    <location>
        <begin position="486"/>
        <end position="487"/>
    </location>
</feature>
<feature type="site" description="Cleavage; by protease VP4">
    <location>
        <begin position="557"/>
        <end position="558"/>
    </location>
</feature>
<feature type="site" description="Cleavage; by protease VP4">
    <location>
        <begin position="791"/>
        <end position="792"/>
    </location>
</feature>
<feature type="mutagenesis site" description="Complete loss of polyprotein processing." evidence="4">
    <original>S</original>
    <variation>A</variation>
    <location>
        <position position="692"/>
    </location>
</feature>
<feature type="mutagenesis site" description="Complete loss of polyprotein processing." evidence="4">
    <original>K</original>
    <variation>A</variation>
    <location>
        <position position="729"/>
    </location>
</feature>
<feature type="strand" evidence="6">
    <location>
        <begin position="562"/>
        <end position="571"/>
    </location>
</feature>
<feature type="strand" evidence="6">
    <location>
        <begin position="576"/>
        <end position="585"/>
    </location>
</feature>
<feature type="strand" evidence="6">
    <location>
        <begin position="587"/>
        <end position="594"/>
    </location>
</feature>
<feature type="strand" evidence="6">
    <location>
        <begin position="599"/>
        <end position="609"/>
    </location>
</feature>
<feature type="helix" evidence="6">
    <location>
        <begin position="612"/>
        <end position="614"/>
    </location>
</feature>
<feature type="helix" evidence="6">
    <location>
        <begin position="617"/>
        <end position="620"/>
    </location>
</feature>
<feature type="strand" evidence="6">
    <location>
        <begin position="623"/>
        <end position="625"/>
    </location>
</feature>
<feature type="strand" evidence="6">
    <location>
        <begin position="631"/>
        <end position="633"/>
    </location>
</feature>
<feature type="strand" evidence="6">
    <location>
        <begin position="660"/>
        <end position="670"/>
    </location>
</feature>
<feature type="strand" evidence="6">
    <location>
        <begin position="676"/>
        <end position="682"/>
    </location>
</feature>
<feature type="strand" evidence="6">
    <location>
        <begin position="688"/>
        <end position="691"/>
    </location>
</feature>
<feature type="helix" evidence="6">
    <location>
        <begin position="694"/>
        <end position="702"/>
    </location>
</feature>
<feature type="strand" evidence="6">
    <location>
        <begin position="708"/>
        <end position="712"/>
    </location>
</feature>
<feature type="strand" evidence="6">
    <location>
        <begin position="714"/>
        <end position="716"/>
    </location>
</feature>
<feature type="strand" evidence="6">
    <location>
        <begin position="719"/>
        <end position="721"/>
    </location>
</feature>
<feature type="helix" evidence="6">
    <location>
        <begin position="726"/>
        <end position="734"/>
    </location>
</feature>
<feature type="turn" evidence="6">
    <location>
        <begin position="735"/>
        <end position="737"/>
    </location>
</feature>
<feature type="strand" evidence="6">
    <location>
        <begin position="740"/>
        <end position="742"/>
    </location>
</feature>
<feature type="strand" evidence="6">
    <location>
        <begin position="749"/>
        <end position="752"/>
    </location>
</feature>
<feature type="helix" evidence="6">
    <location>
        <begin position="756"/>
        <end position="765"/>
    </location>
</feature>
<sequence length="1069" mass="115494">MDFSKENTQIRYLNSLLVPETGSTSIPDDTLDRHCLKTETTTENLVAALGGSGLIVLFPNSPSGLLGAHYTKTPQGSLIFDKAITTSQDLKKAYNYARLVSRIVQVRSSTLPAGVYALNGTFNGVTYIGSLSEIKDLDYNSLLSATANINDKVGNVLVGDGVAVLSLPAGSDLPYVRLGDEVPSSAGVARCSPSDRPRHYNANNKQVQVGTTDTKTNGFNIDATTPTEVTVDMQIAQIAAGKTLTVTVKLMGLTGAKVASRSETVSGNGGTFHFSTTAVFGETEITQPVVGVQVLAKTNGDPIVVDSYVGVTVHGGNMPGTLRPVTIIAYESVATGSVLTLSGISNYELIPNPELAKNIQTSYGKLNPAEMTYTKVVLSHRDELGLRSIWSIPQYRDMMSYFREVSDRSSPLKIAGAFGWGDLLSGIRKWVFPVVDTLLPAARPLTDLASGWIKNKYPEAASGRPLAASGRPMAASGTFSKRIPLASSDEIDYQSVLALTIPGTHPKLVPPTEREPNSTPDGHKITGAKTKDNTGGDVTVVKPLDWLFKLPCLRPQAADLPISLLQTLAYKQPLGRNSRIVHFTDGALFPVVAFGDNHSTSELYIAVRGDHRDLMSPDVRDSYALTGDDHKVWGATHHTYYVEGAPKKPLKFNVKTRTDLTILPVADVFWRADGSADVDVVWNDMPAVAGQSSSIALALASSLPFVPKAAYTGCLSGTNVQPVQFGNLKARAAHKIGLPLVGMTQDGGEDTRICTLDDAADHAFDSMESTVTRPESVGHQAAFQGWFYCGAADEETIEELEDFLDSIELHSKPTVEQPQTEEAMELLMELARKDPQMSKILVILGWVEGAGLIDALYNWAQLDDGGVRMRNMLRNLPHEGSKSQRRKHGPAPESRESTRMEVLRREAAAKRKKAQRISEDAMDNGFEFATIDWVLENGSRGPNPAQAKYYKATGLDPEPGLTEFLPEPTHAPENKAAKLAATIYGSPNQAPAPPEFVEEVAAVLMENNGRGPNQAQMRELRLKALTMKSGSGAAATFKPRNRRPAQEYQPRPPITSRAGRFLNISTTLS</sequence>
<dbReference type="EC" id="3.4.21.-"/>
<dbReference type="EMBL" id="AJ459382">
    <property type="protein sequence ID" value="CAD30689.1"/>
    <property type="molecule type" value="Genomic_RNA"/>
</dbReference>
<dbReference type="RefSeq" id="YP_052862.1">
    <property type="nucleotide sequence ID" value="NC_005982.1"/>
</dbReference>
<dbReference type="PDB" id="2GEF">
    <property type="method" value="X-ray"/>
    <property type="resolution" value="2.20 A"/>
    <property type="chains" value="A/B=558-773"/>
</dbReference>
<dbReference type="PDBsum" id="2GEF"/>
<dbReference type="SMR" id="Q8AZM0"/>
<dbReference type="MEROPS" id="S50.004"/>
<dbReference type="GeneID" id="2943237"/>
<dbReference type="KEGG" id="vg:2943237"/>
<dbReference type="BRENDA" id="3.4.21.115">
    <property type="organism ID" value="8705"/>
</dbReference>
<dbReference type="EvolutionaryTrace" id="Q8AZM0"/>
<dbReference type="Proteomes" id="UP000007250">
    <property type="component" value="Genome"/>
</dbReference>
<dbReference type="GO" id="GO:0030430">
    <property type="term" value="C:host cell cytoplasm"/>
    <property type="evidence" value="ECO:0007669"/>
    <property type="project" value="UniProtKB-SubCell"/>
</dbReference>
<dbReference type="GO" id="GO:0039621">
    <property type="term" value="C:T=13 icosahedral viral capsid"/>
    <property type="evidence" value="ECO:0007669"/>
    <property type="project" value="UniProtKB-KW"/>
</dbReference>
<dbReference type="GO" id="GO:0046872">
    <property type="term" value="F:metal ion binding"/>
    <property type="evidence" value="ECO:0007669"/>
    <property type="project" value="UniProtKB-KW"/>
</dbReference>
<dbReference type="GO" id="GO:0008236">
    <property type="term" value="F:serine-type peptidase activity"/>
    <property type="evidence" value="ECO:0007669"/>
    <property type="project" value="UniProtKB-KW"/>
</dbReference>
<dbReference type="GO" id="GO:0005198">
    <property type="term" value="F:structural molecule activity"/>
    <property type="evidence" value="ECO:0007669"/>
    <property type="project" value="InterPro"/>
</dbReference>
<dbReference type="GO" id="GO:0006508">
    <property type="term" value="P:proteolysis"/>
    <property type="evidence" value="ECO:0007669"/>
    <property type="project" value="UniProtKB-KW"/>
</dbReference>
<dbReference type="Gene3D" id="2.30.42.30">
    <property type="match status" value="1"/>
</dbReference>
<dbReference type="Gene3D" id="2.60.120.20">
    <property type="match status" value="1"/>
</dbReference>
<dbReference type="Gene3D" id="3.40.50.11300">
    <property type="match status" value="1"/>
</dbReference>
<dbReference type="Gene3D" id="6.10.250.1030">
    <property type="match status" value="1"/>
</dbReference>
<dbReference type="Gene3D" id="1.10.8.880">
    <property type="entry name" value="Birnavirus VP3 protein, domain 2"/>
    <property type="match status" value="1"/>
</dbReference>
<dbReference type="Gene3D" id="1.10.150.620">
    <property type="entry name" value="Capsid protein VP3, domain 1"/>
    <property type="match status" value="1"/>
</dbReference>
<dbReference type="Gene3D" id="2.60.120.660">
    <property type="entry name" value="icosahedral virus"/>
    <property type="match status" value="1"/>
</dbReference>
<dbReference type="InterPro" id="IPR002662">
    <property type="entry name" value="Birna_VP2"/>
</dbReference>
<dbReference type="InterPro" id="IPR002663">
    <property type="entry name" value="Birna_VP3"/>
</dbReference>
<dbReference type="InterPro" id="IPR043048">
    <property type="entry name" value="Birna_VP3_dom1"/>
</dbReference>
<dbReference type="InterPro" id="IPR043049">
    <property type="entry name" value="Birna_VP3_dom2"/>
</dbReference>
<dbReference type="InterPro" id="IPR025775">
    <property type="entry name" value="Birna_VP4_Prtase_dom"/>
</dbReference>
<dbReference type="InterPro" id="IPR029053">
    <property type="entry name" value="Viral_coat"/>
</dbReference>
<dbReference type="Pfam" id="PF01766">
    <property type="entry name" value="Birna_VP2"/>
    <property type="match status" value="1"/>
</dbReference>
<dbReference type="Pfam" id="PF01767">
    <property type="entry name" value="Birna_VP3"/>
    <property type="match status" value="1"/>
</dbReference>
<dbReference type="Pfam" id="PF01768">
    <property type="entry name" value="Birna_VP4"/>
    <property type="match status" value="1"/>
</dbReference>
<dbReference type="SUPFAM" id="SSF88633">
    <property type="entry name" value="Positive stranded ssRNA viruses"/>
    <property type="match status" value="1"/>
</dbReference>
<dbReference type="PROSITE" id="PS51548">
    <property type="entry name" value="BIRNAVIRUS_VP4_PRO"/>
    <property type="match status" value="1"/>
</dbReference>
<organismHost>
    <name type="scientific">Channa lucius</name>
    <name type="common">Forest snakehead</name>
    <name type="synonym">Ophicephalus lucius</name>
    <dbReference type="NCBI Taxonomy" id="64146"/>
</organismHost>
<accession>Q8AZM0</accession>
<evidence type="ECO:0000250" key="1"/>
<evidence type="ECO:0000255" key="2">
    <source>
        <dbReference type="PROSITE-ProRule" id="PRU00881"/>
    </source>
</evidence>
<evidence type="ECO:0000256" key="3">
    <source>
        <dbReference type="SAM" id="MobiDB-lite"/>
    </source>
</evidence>
<evidence type="ECO:0000269" key="4">
    <source>
    </source>
</evidence>
<evidence type="ECO:0000305" key="5"/>
<evidence type="ECO:0007829" key="6">
    <source>
        <dbReference type="PDB" id="2GEF"/>
    </source>
</evidence>
<keyword id="KW-0002">3D-structure</keyword>
<keyword id="KW-0167">Capsid protein</keyword>
<keyword id="KW-0903">Direct protein sequencing</keyword>
<keyword id="KW-1035">Host cytoplasm</keyword>
<keyword id="KW-0378">Hydrolase</keyword>
<keyword id="KW-0479">Metal-binding</keyword>
<keyword id="KW-0645">Protease</keyword>
<keyword id="KW-1185">Reference proteome</keyword>
<keyword id="KW-0720">Serine protease</keyword>
<keyword id="KW-1146">T=13 icosahedral capsid protein</keyword>
<keyword id="KW-0946">Virion</keyword>
<reference key="1">
    <citation type="journal article" date="2003" name="J. Virol.">
        <title>Blotched snakehead virus is a new aquatic birnavirus that is slightly more related to avibirnavirus than to aquabirnavirus.</title>
        <authorList>
            <person name="Da Costa B."/>
            <person name="Soignier S."/>
            <person name="Chevalier C."/>
            <person name="Henry C."/>
            <person name="Thory C."/>
            <person name="Huet J.-C."/>
            <person name="Delmas B."/>
        </authorList>
    </citation>
    <scope>NUCLEOTIDE SEQUENCE [GENOMIC RNA]</scope>
    <scope>PROTEIN SEQUENCE OF 418-442; 475-486; 558-564 AND 792-798</scope>
    <scope>ACTIVE SITES</scope>
    <scope>PROTEOLYTIC PROCESSING OF POLYPROTEIN</scope>
    <scope>MUTAGENESIS OF SER-692 AND LYS-729</scope>
</reference>
<reference key="2">
    <citation type="journal article" date="2006" name="J. Mol. Biol.">
        <title>Crystal structure of a novel viral protease with a serine/lysine catalytic dyad mechanism.</title>
        <authorList>
            <person name="Feldman A.R."/>
            <person name="Lee J."/>
            <person name="Delmas B."/>
            <person name="Paetzel M."/>
        </authorList>
    </citation>
    <scope>X-RAY CRYSTALLOGRAPHY (2.2 ANGSTROMS) OF 558-773</scope>
</reference>
<proteinExistence type="evidence at protein level"/>
<protein>
    <recommendedName>
        <fullName>Structural polyprotein</fullName>
        <shortName>PP</shortName>
    </recommendedName>
    <component>
        <recommendedName>
            <fullName>Precursor of VP2</fullName>
            <shortName>Pre-VP2</shortName>
        </recommendedName>
    </component>
    <component>
        <recommendedName>
            <fullName>Capsid protein VP2</fullName>
        </recommendedName>
    </component>
    <component>
        <recommendedName>
            <fullName>Structural peptide 1</fullName>
            <shortName>p1</shortName>
        </recommendedName>
    </component>
    <component>
        <recommendedName>
            <fullName>Structural peptide 2</fullName>
            <shortName>p2</shortName>
        </recommendedName>
    </component>
    <component>
        <recommendedName>
            <fullName>Structural peptide 3</fullName>
            <shortName>p3</shortName>
        </recommendedName>
    </component>
    <component>
        <recommendedName>
            <fullName>Structural peptide 4</fullName>
            <shortName>p4</shortName>
        </recommendedName>
    </component>
    <component>
        <recommendedName>
            <fullName>Protein X</fullName>
        </recommendedName>
    </component>
    <component>
        <recommendedName>
            <fullName>Protease VP4</fullName>
            <ecNumber>3.4.21.-</ecNumber>
        </recommendedName>
        <alternativeName>
            <fullName>Non-structural protein VP4</fullName>
            <shortName>NS</shortName>
        </alternativeName>
    </component>
    <component>
        <recommendedName>
            <fullName>Capsid protein VP3</fullName>
        </recommendedName>
    </component>
</protein>
<organism>
    <name type="scientific">Blotched snakehead virus</name>
    <name type="common">BSNV</name>
    <name type="synonym">Channa lucius virus</name>
    <dbReference type="NCBI Taxonomy" id="311176"/>
    <lineage>
        <taxon>Viruses</taxon>
        <taxon>Riboviria</taxon>
        <taxon>Orthornavirae</taxon>
        <taxon>Birnaviridae</taxon>
        <taxon>Blosnavirus</taxon>
        <taxon>Blosnavirus channae</taxon>
    </lineage>
</organism>
<name>POLS_BSNV</name>
<comment type="function">
    <text evidence="1">Capsid protein VP2 self assembles to form an icosahedral capsid with a T=13 symmetry, about 70 nm in diameter, and consisting of 260 VP2 trimers. The capsid encapsulates the genomic dsRNA. VP2 is also involved in attachment and entry into the host cell (By similarity).</text>
</comment>
<comment type="function">
    <text evidence="1">The precursor of VP2 plays an important role in capsid assembly. First, pre-VP2 and VP2 oligomers assemble to form a procapsid. Then, the pre-VP2 intermediates may be processed into VP2 proteins by proteolytic cleavage mediated by VP4 to obtain the mature virion. The final capsid is composed of pentamers and hexamers but VP2 has a natural tendency to assemble into all-pentameric structures. Therefore pre-VP2 may be required to allow formation of the hexameric structures (By similarity).</text>
</comment>
<comment type="function">
    <text evidence="2">Protease VP4 is a serine protease that cleaves the polyprotein into its final products. Pre-VP2 is first partially cleaved, and may be completely processed by VP4 upon capsid maturation.</text>
</comment>
<comment type="function">
    <text evidence="1">Capsid protein VP3 plays a key role in virion assembly by providing a scaffold for the capsid made of VP2. May self-assemble to form a T=4-like icosahedral inner-capsid composed of at least 180 trimers. Plays a role in genomic RNA packaging by recruiting VP1 into the capsid and interacting with the dsRNA genome segments to form a ribonucleoprotein complex. Additionally, the interaction of the VP3 C-terminal tail with VP1 removes the inherent structural blockade of the polymerase active site. Thus, VP3 can also function as a transcriptional activator (By similarity).</text>
</comment>
<comment type="function">
    <text evidence="1">Structural peptide 1 is a small peptide derived from pre-VP2 C-terminus. It destabilizes and perforates cell membranes, suggesting a role during entry (By similarity).</text>
</comment>
<comment type="function">
    <text evidence="1">Structural peptide 2 is a small peptide derived from pre-VP2 C-terminus. It is not essential for the virus viability, but viral growth is affected when missing (By similarity).</text>
</comment>
<comment type="function">
    <text evidence="1">Structural peptide 3 is a small peptide derived from pre-VP2 C-terminus. It is not essential for the virus viability, but viral growth is affected when missing (By similarity).</text>
</comment>
<comment type="function">
    <text evidence="1">Structural peptide 4 is a small peptide derived from pre-VP2 C-terminus. It is essential for the virus viability (By similarity).</text>
</comment>
<comment type="subunit">
    <molecule>Capsid protein VP2</molecule>
    <text evidence="1">Homotrimer. A central divalent metal stabilizes the VP2 trimer (By similarity).</text>
</comment>
<comment type="subunit">
    <molecule>Capsid protein VP3</molecule>
    <text evidence="1">Homodimer. Interacts (via C-terminus) with VP1 in the cytoplasm. Interacts with VP2 (By similarity).</text>
</comment>
<comment type="subcellular location">
    <molecule>Capsid protein VP2</molecule>
    <subcellularLocation>
        <location evidence="5">Virion</location>
    </subcellularLocation>
    <subcellularLocation>
        <location evidence="5">Host cytoplasm</location>
    </subcellularLocation>
</comment>
<comment type="subcellular location">
    <molecule>Capsid protein VP3</molecule>
    <subcellularLocation>
        <location evidence="5">Virion</location>
    </subcellularLocation>
    <subcellularLocation>
        <location evidence="5">Host cytoplasm</location>
    </subcellularLocation>
</comment>
<comment type="subcellular location">
    <molecule>Structural peptide 1</molecule>
    <subcellularLocation>
        <location evidence="5">Virion</location>
    </subcellularLocation>
    <subcellularLocation>
        <location evidence="5">Host cytoplasm</location>
    </subcellularLocation>
</comment>
<comment type="subcellular location">
    <molecule>Structural peptide 2</molecule>
    <subcellularLocation>
        <location evidence="5">Virion</location>
    </subcellularLocation>
    <subcellularLocation>
        <location evidence="5">Host cytoplasm</location>
    </subcellularLocation>
</comment>
<comment type="subcellular location">
    <molecule>Structural peptide 3</molecule>
    <subcellularLocation>
        <location evidence="5">Virion</location>
    </subcellularLocation>
    <subcellularLocation>
        <location evidence="5">Host cytoplasm</location>
    </subcellularLocation>
</comment>
<comment type="subcellular location">
    <molecule>Structural peptide 4</molecule>
    <subcellularLocation>
        <location evidence="5">Virion</location>
    </subcellularLocation>
    <subcellularLocation>
        <location evidence="5">Host cytoplasm</location>
    </subcellularLocation>
</comment>
<comment type="PTM">
    <text evidence="1">Specific enzymatic cleavages yield mature proteins. The capsid assembly seems to be regulated by polyprotein processing. The protease VP4 cleaves itself off the polyprotein, thus releasing pre-VP2 and VP3 within the infected cell. During capsid assembly, the C-terminus of pre-VP2 is further processed by VP4, giving rise to VP2, the external capsid protein and three small peptides that all stay closely associated with the capsid (By similarity).</text>
</comment>
<comment type="PTM">
    <text>The N-termini of VP2 and VP3 are blocked.</text>
</comment>